<reference key="1">
    <citation type="journal article" date="2000" name="Proc. Natl. Acad. Sci. U.S.A.">
        <title>Genome sequence of Halobacterium species NRC-1.</title>
        <authorList>
            <person name="Ng W.V."/>
            <person name="Kennedy S.P."/>
            <person name="Mahairas G.G."/>
            <person name="Berquist B."/>
            <person name="Pan M."/>
            <person name="Shukla H.D."/>
            <person name="Lasky S.R."/>
            <person name="Baliga N.S."/>
            <person name="Thorsson V."/>
            <person name="Sbrogna J."/>
            <person name="Swartzell S."/>
            <person name="Weir D."/>
            <person name="Hall J."/>
            <person name="Dahl T.A."/>
            <person name="Welti R."/>
            <person name="Goo Y.A."/>
            <person name="Leithauser B."/>
            <person name="Keller K."/>
            <person name="Cruz R."/>
            <person name="Danson M.J."/>
            <person name="Hough D.W."/>
            <person name="Maddocks D.G."/>
            <person name="Jablonski P.E."/>
            <person name="Krebs M.P."/>
            <person name="Angevine C.M."/>
            <person name="Dale H."/>
            <person name="Isenbarger T.A."/>
            <person name="Peck R.F."/>
            <person name="Pohlschroder M."/>
            <person name="Spudich J.L."/>
            <person name="Jung K.-H."/>
            <person name="Alam M."/>
            <person name="Freitas T."/>
            <person name="Hou S."/>
            <person name="Daniels C.J."/>
            <person name="Dennis P.P."/>
            <person name="Omer A.D."/>
            <person name="Ebhardt H."/>
            <person name="Lowe T.M."/>
            <person name="Liang P."/>
            <person name="Riley M."/>
            <person name="Hood L."/>
            <person name="DasSarma S."/>
        </authorList>
    </citation>
    <scope>NUCLEOTIDE SEQUENCE [LARGE SCALE GENOMIC DNA]</scope>
    <source>
        <strain>ATCC 700922 / JCM 11081 / NRC-1</strain>
    </source>
</reference>
<protein>
    <recommendedName>
        <fullName evidence="1">3-phosphoshikimate 1-carboxyvinyltransferase</fullName>
        <ecNumber evidence="1">2.5.1.19</ecNumber>
    </recommendedName>
    <alternativeName>
        <fullName evidence="1">5-enolpyruvylshikimate-3-phosphate synthase</fullName>
        <shortName evidence="1">EPSP synthase</shortName>
        <shortName evidence="1">EPSPS</shortName>
    </alternativeName>
</protein>
<accession>Q9HQC1</accession>
<evidence type="ECO:0000255" key="1">
    <source>
        <dbReference type="HAMAP-Rule" id="MF_00210"/>
    </source>
</evidence>
<keyword id="KW-0028">Amino-acid biosynthesis</keyword>
<keyword id="KW-0057">Aromatic amino acid biosynthesis</keyword>
<keyword id="KW-0963">Cytoplasm</keyword>
<keyword id="KW-1185">Reference proteome</keyword>
<keyword id="KW-0808">Transferase</keyword>
<sequence length="439" mass="44333">MPWAALLAGMHATVSPSRVRGRARAPPSKSYTHRALLAAGYADGETVVRDPLVSADTRATARAVELLGGAAARENGDWVVTGFGSRPAIPDAVIDCANSGTTMRLVTAAAALADGTTVLTGDESLRARPHGPLLDALSGLGGTARSTRGNGQAPLVVDGPVSGGSVALPGDVSSQFVTALLMAGAVTETGIETDLTTELKSAPYVDITLDVLDAFGVGASETAAGYRVRGGQAYAPSGAEYAVPGDFSSASYLLAAGALAAADGAAVVVEGMHPSAQGDAAIVDVLERMGADIDWDTESGVITVQRSELSGVEVGVADTPDLLPTIAVLGAAADGTTRITDAEHVRYKETDRVAAMAESLSKLGASVEERPDELVVRGGDTELSGASVDGRGDHRLVMALAVAGLVADGETTIAGSEHVDVSFPDFFEVLAGLGADTDG</sequence>
<dbReference type="EC" id="2.5.1.19" evidence="1"/>
<dbReference type="EMBL" id="AE004437">
    <property type="protein sequence ID" value="AAG19594.1"/>
    <property type="molecule type" value="Genomic_DNA"/>
</dbReference>
<dbReference type="PIR" id="F84278">
    <property type="entry name" value="F84278"/>
</dbReference>
<dbReference type="SMR" id="Q9HQC1"/>
<dbReference type="FunCoup" id="Q9HQC1">
    <property type="interactions" value="105"/>
</dbReference>
<dbReference type="STRING" id="64091.VNG_1232G"/>
<dbReference type="PaxDb" id="64091-VNG_1232G"/>
<dbReference type="KEGG" id="hal:VNG_1232G"/>
<dbReference type="PATRIC" id="fig|64091.14.peg.942"/>
<dbReference type="HOGENOM" id="CLU_024321_0_0_2"/>
<dbReference type="InParanoid" id="Q9HQC1"/>
<dbReference type="UniPathway" id="UPA00053"/>
<dbReference type="Proteomes" id="UP000000554">
    <property type="component" value="Chromosome"/>
</dbReference>
<dbReference type="GO" id="GO:0005737">
    <property type="term" value="C:cytoplasm"/>
    <property type="evidence" value="ECO:0007669"/>
    <property type="project" value="UniProtKB-SubCell"/>
</dbReference>
<dbReference type="GO" id="GO:0003866">
    <property type="term" value="F:3-phosphoshikimate 1-carboxyvinyltransferase activity"/>
    <property type="evidence" value="ECO:0000318"/>
    <property type="project" value="GO_Central"/>
</dbReference>
<dbReference type="GO" id="GO:0008652">
    <property type="term" value="P:amino acid biosynthetic process"/>
    <property type="evidence" value="ECO:0007669"/>
    <property type="project" value="UniProtKB-KW"/>
</dbReference>
<dbReference type="GO" id="GO:0009073">
    <property type="term" value="P:aromatic amino acid family biosynthetic process"/>
    <property type="evidence" value="ECO:0007669"/>
    <property type="project" value="UniProtKB-KW"/>
</dbReference>
<dbReference type="GO" id="GO:0009423">
    <property type="term" value="P:chorismate biosynthetic process"/>
    <property type="evidence" value="ECO:0000318"/>
    <property type="project" value="GO_Central"/>
</dbReference>
<dbReference type="CDD" id="cd01556">
    <property type="entry name" value="EPSP_synthase"/>
    <property type="match status" value="1"/>
</dbReference>
<dbReference type="FunFam" id="3.65.10.10:FF:000021">
    <property type="entry name" value="3-phosphoshikimate 1-carboxyvinyltransferase"/>
    <property type="match status" value="1"/>
</dbReference>
<dbReference type="FunFam" id="3.65.10.10:FF:000012">
    <property type="entry name" value="Pentafunctional AROM polypeptide"/>
    <property type="match status" value="1"/>
</dbReference>
<dbReference type="Gene3D" id="3.65.10.10">
    <property type="entry name" value="Enolpyruvate transferase domain"/>
    <property type="match status" value="2"/>
</dbReference>
<dbReference type="HAMAP" id="MF_00210">
    <property type="entry name" value="EPSP_synth"/>
    <property type="match status" value="1"/>
</dbReference>
<dbReference type="InterPro" id="IPR001986">
    <property type="entry name" value="Enolpyruvate_Tfrase_dom"/>
</dbReference>
<dbReference type="InterPro" id="IPR036968">
    <property type="entry name" value="Enolpyruvate_Tfrase_sf"/>
</dbReference>
<dbReference type="InterPro" id="IPR006264">
    <property type="entry name" value="EPSP_synthase"/>
</dbReference>
<dbReference type="InterPro" id="IPR023193">
    <property type="entry name" value="EPSP_synthase_CS"/>
</dbReference>
<dbReference type="InterPro" id="IPR013792">
    <property type="entry name" value="RNA3'P_cycl/enolpyr_Trfase_a/b"/>
</dbReference>
<dbReference type="NCBIfam" id="TIGR01356">
    <property type="entry name" value="aroA"/>
    <property type="match status" value="1"/>
</dbReference>
<dbReference type="PANTHER" id="PTHR21090">
    <property type="entry name" value="AROM/DEHYDROQUINATE SYNTHASE"/>
    <property type="match status" value="1"/>
</dbReference>
<dbReference type="PANTHER" id="PTHR21090:SF5">
    <property type="entry name" value="PENTAFUNCTIONAL AROM POLYPEPTIDE"/>
    <property type="match status" value="1"/>
</dbReference>
<dbReference type="Pfam" id="PF00275">
    <property type="entry name" value="EPSP_synthase"/>
    <property type="match status" value="1"/>
</dbReference>
<dbReference type="PIRSF" id="PIRSF000505">
    <property type="entry name" value="EPSPS"/>
    <property type="match status" value="1"/>
</dbReference>
<dbReference type="SUPFAM" id="SSF55205">
    <property type="entry name" value="EPT/RTPC-like"/>
    <property type="match status" value="1"/>
</dbReference>
<dbReference type="PROSITE" id="PS00104">
    <property type="entry name" value="EPSP_SYNTHASE_1"/>
    <property type="match status" value="1"/>
</dbReference>
<dbReference type="PROSITE" id="PS00885">
    <property type="entry name" value="EPSP_SYNTHASE_2"/>
    <property type="match status" value="1"/>
</dbReference>
<gene>
    <name evidence="1" type="primary">aroA</name>
    <name type="synonym">psc</name>
    <name type="ordered locus">VNG_1232G</name>
</gene>
<feature type="chain" id="PRO_0000088327" description="3-phosphoshikimate 1-carboxyvinyltransferase">
    <location>
        <begin position="1"/>
        <end position="439"/>
    </location>
</feature>
<feature type="active site" description="Proton acceptor" evidence="1">
    <location>
        <position position="321"/>
    </location>
</feature>
<feature type="binding site" evidence="1">
    <location>
        <position position="29"/>
    </location>
    <ligand>
        <name>3-phosphoshikimate</name>
        <dbReference type="ChEBI" id="CHEBI:145989"/>
    </ligand>
</feature>
<feature type="binding site" evidence="1">
    <location>
        <position position="29"/>
    </location>
    <ligand>
        <name>phosphoenolpyruvate</name>
        <dbReference type="ChEBI" id="CHEBI:58702"/>
    </ligand>
</feature>
<feature type="binding site" evidence="1">
    <location>
        <position position="30"/>
    </location>
    <ligand>
        <name>3-phosphoshikimate</name>
        <dbReference type="ChEBI" id="CHEBI:145989"/>
    </ligand>
</feature>
<feature type="binding site" evidence="1">
    <location>
        <position position="34"/>
    </location>
    <ligand>
        <name>3-phosphoshikimate</name>
        <dbReference type="ChEBI" id="CHEBI:145989"/>
    </ligand>
</feature>
<feature type="binding site" evidence="1">
    <location>
        <position position="100"/>
    </location>
    <ligand>
        <name>phosphoenolpyruvate</name>
        <dbReference type="ChEBI" id="CHEBI:58702"/>
    </ligand>
</feature>
<feature type="binding site" evidence="1">
    <location>
        <position position="128"/>
    </location>
    <ligand>
        <name>phosphoenolpyruvate</name>
        <dbReference type="ChEBI" id="CHEBI:58702"/>
    </ligand>
</feature>
<feature type="binding site" evidence="1">
    <location>
        <position position="173"/>
    </location>
    <ligand>
        <name>3-phosphoshikimate</name>
        <dbReference type="ChEBI" id="CHEBI:145989"/>
    </ligand>
</feature>
<feature type="binding site" evidence="1">
    <location>
        <position position="174"/>
    </location>
    <ligand>
        <name>3-phosphoshikimate</name>
        <dbReference type="ChEBI" id="CHEBI:145989"/>
    </ligand>
</feature>
<feature type="binding site" evidence="1">
    <location>
        <position position="175"/>
    </location>
    <ligand>
        <name>3-phosphoshikimate</name>
        <dbReference type="ChEBI" id="CHEBI:145989"/>
    </ligand>
</feature>
<feature type="binding site" evidence="1">
    <location>
        <position position="175"/>
    </location>
    <ligand>
        <name>phosphoenolpyruvate</name>
        <dbReference type="ChEBI" id="CHEBI:58702"/>
    </ligand>
</feature>
<feature type="binding site" evidence="1">
    <location>
        <position position="201"/>
    </location>
    <ligand>
        <name>3-phosphoshikimate</name>
        <dbReference type="ChEBI" id="CHEBI:145989"/>
    </ligand>
</feature>
<feature type="binding site" evidence="1">
    <location>
        <position position="321"/>
    </location>
    <ligand>
        <name>3-phosphoshikimate</name>
        <dbReference type="ChEBI" id="CHEBI:145989"/>
    </ligand>
</feature>
<feature type="binding site" evidence="1">
    <location>
        <position position="348"/>
    </location>
    <ligand>
        <name>3-phosphoshikimate</name>
        <dbReference type="ChEBI" id="CHEBI:145989"/>
    </ligand>
</feature>
<feature type="binding site" evidence="1">
    <location>
        <position position="352"/>
    </location>
    <ligand>
        <name>phosphoenolpyruvate</name>
        <dbReference type="ChEBI" id="CHEBI:58702"/>
    </ligand>
</feature>
<feature type="binding site" evidence="1">
    <location>
        <position position="395"/>
    </location>
    <ligand>
        <name>phosphoenolpyruvate</name>
        <dbReference type="ChEBI" id="CHEBI:58702"/>
    </ligand>
</feature>
<name>AROA_HALSA</name>
<proteinExistence type="inferred from homology"/>
<comment type="function">
    <text evidence="1">Catalyzes the transfer of the enolpyruvyl moiety of phosphoenolpyruvate (PEP) to the 5-hydroxyl of shikimate-3-phosphate (S3P) to produce enolpyruvyl shikimate-3-phosphate and inorganic phosphate.</text>
</comment>
<comment type="catalytic activity">
    <reaction evidence="1">
        <text>3-phosphoshikimate + phosphoenolpyruvate = 5-O-(1-carboxyvinyl)-3-phosphoshikimate + phosphate</text>
        <dbReference type="Rhea" id="RHEA:21256"/>
        <dbReference type="ChEBI" id="CHEBI:43474"/>
        <dbReference type="ChEBI" id="CHEBI:57701"/>
        <dbReference type="ChEBI" id="CHEBI:58702"/>
        <dbReference type="ChEBI" id="CHEBI:145989"/>
        <dbReference type="EC" id="2.5.1.19"/>
    </reaction>
    <physiologicalReaction direction="left-to-right" evidence="1">
        <dbReference type="Rhea" id="RHEA:21257"/>
    </physiologicalReaction>
</comment>
<comment type="pathway">
    <text evidence="1">Metabolic intermediate biosynthesis; chorismate biosynthesis.</text>
</comment>
<comment type="subunit">
    <text evidence="1">Monomer.</text>
</comment>
<comment type="subcellular location">
    <subcellularLocation>
        <location evidence="1">Cytoplasm</location>
    </subcellularLocation>
</comment>
<comment type="similarity">
    <text evidence="1">Belongs to the EPSP synthase family.</text>
</comment>
<organism>
    <name type="scientific">Halobacterium salinarum (strain ATCC 700922 / JCM 11081 / NRC-1)</name>
    <name type="common">Halobacterium halobium</name>
    <dbReference type="NCBI Taxonomy" id="64091"/>
    <lineage>
        <taxon>Archaea</taxon>
        <taxon>Methanobacteriati</taxon>
        <taxon>Methanobacteriota</taxon>
        <taxon>Stenosarchaea group</taxon>
        <taxon>Halobacteria</taxon>
        <taxon>Halobacteriales</taxon>
        <taxon>Halobacteriaceae</taxon>
        <taxon>Halobacterium</taxon>
        <taxon>Halobacterium salinarum NRC-34001</taxon>
    </lineage>
</organism>